<comment type="similarity">
    <text evidence="2">Belongs to the SRP1/TIP1 family. Seripauperin subfamily.</text>
</comment>
<protein>
    <recommendedName>
        <fullName>Seripauperin-8</fullName>
    </recommendedName>
</protein>
<name>PAU8_YEAST</name>
<gene>
    <name type="primary">PAU8</name>
    <name type="ordered locus">YAL068C</name>
</gene>
<evidence type="ECO:0000255" key="1"/>
<evidence type="ECO:0000305" key="2"/>
<reference key="1">
    <citation type="journal article" date="1995" name="Proc. Natl. Acad. Sci. U.S.A.">
        <title>The nucleotide sequence of chromosome I from Saccharomyces cerevisiae.</title>
        <authorList>
            <person name="Bussey H."/>
            <person name="Kaback D.B."/>
            <person name="Zhong W.-W."/>
            <person name="Vo D.H."/>
            <person name="Clark M.W."/>
            <person name="Fortin N."/>
            <person name="Hall J."/>
            <person name="Ouellette B.F.F."/>
            <person name="Keng T."/>
            <person name="Barton A.B."/>
            <person name="Su Y."/>
            <person name="Davies C.J."/>
            <person name="Storms R.K."/>
        </authorList>
    </citation>
    <scope>NUCLEOTIDE SEQUENCE [LARGE SCALE GENOMIC DNA]</scope>
    <source>
        <strain>ATCC 204508 / S288c</strain>
    </source>
</reference>
<reference key="2">
    <citation type="journal article" date="2014" name="G3 (Bethesda)">
        <title>The reference genome sequence of Saccharomyces cerevisiae: Then and now.</title>
        <authorList>
            <person name="Engel S.R."/>
            <person name="Dietrich F.S."/>
            <person name="Fisk D.G."/>
            <person name="Binkley G."/>
            <person name="Balakrishnan R."/>
            <person name="Costanzo M.C."/>
            <person name="Dwight S.S."/>
            <person name="Hitz B.C."/>
            <person name="Karra K."/>
            <person name="Nash R.S."/>
            <person name="Weng S."/>
            <person name="Wong E.D."/>
            <person name="Lloyd P."/>
            <person name="Skrzypek M.S."/>
            <person name="Miyasato S.R."/>
            <person name="Simison M."/>
            <person name="Cherry J.M."/>
        </authorList>
    </citation>
    <scope>GENOME REANNOTATION</scope>
    <source>
        <strain>ATCC 204508 / S288c</strain>
    </source>
</reference>
<accession>P0CE92</accession>
<accession>D6VPE8</accession>
<accession>P53055</accession>
<accession>Q7LI06</accession>
<sequence>MVKLTSIAAGVAAIAATASATTTLAQSDERVNLVELGVYVSDIRAHLAQYYMFQAAHPTETYPVEVAEAVFNYGDFTTMLTGIAPDQVTRMITGVPWYSSRLKPAISSALSKDGIYTIAN</sequence>
<proteinExistence type="inferred from homology"/>
<dbReference type="EMBL" id="U73805">
    <property type="protein sequence ID" value="AAB70015.1"/>
    <property type="molecule type" value="Genomic_DNA"/>
</dbReference>
<dbReference type="EMBL" id="BK006935">
    <property type="protein sequence ID" value="DAA06918.1"/>
    <property type="molecule type" value="Genomic_DNA"/>
</dbReference>
<dbReference type="PIR" id="S61600">
    <property type="entry name" value="S61600"/>
</dbReference>
<dbReference type="RefSeq" id="NP_009332.1">
    <property type="nucleotide sequence ID" value="NM_001180043.1"/>
</dbReference>
<dbReference type="BioGRID" id="31761">
    <property type="interactions" value="53"/>
</dbReference>
<dbReference type="BioGRID" id="33018">
    <property type="interactions" value="32"/>
</dbReference>
<dbReference type="FunCoup" id="P0CE92">
    <property type="interactions" value="43"/>
</dbReference>
<dbReference type="EnsemblFungi" id="YAL068C_mRNA">
    <property type="protein sequence ID" value="YAL068C"/>
    <property type="gene ID" value="YAL068C"/>
</dbReference>
<dbReference type="EnsemblFungi" id="YGL261C_mRNA">
    <property type="protein sequence ID" value="YGL261C"/>
    <property type="gene ID" value="YGL261C"/>
</dbReference>
<dbReference type="GeneID" id="851229"/>
<dbReference type="KEGG" id="sce:YAL068C"/>
<dbReference type="KEGG" id="sce:YGL261C"/>
<dbReference type="AGR" id="SGD:S000002142"/>
<dbReference type="SGD" id="S000002142">
    <property type="gene designation" value="PAU8"/>
</dbReference>
<dbReference type="VEuPathDB" id="FungiDB:YAL068C"/>
<dbReference type="VEuPathDB" id="FungiDB:YGL261C"/>
<dbReference type="HOGENOM" id="CLU_136376_0_0_1"/>
<dbReference type="InParanoid" id="P0CE92"/>
<dbReference type="OrthoDB" id="4059055at2759"/>
<dbReference type="BioCyc" id="YEAST:G3O-28894-MONOMER"/>
<dbReference type="PRO" id="PR:P0CE92"/>
<dbReference type="Proteomes" id="UP000002311">
    <property type="component" value="Chromosome I"/>
</dbReference>
<dbReference type="RNAct" id="P0CE92">
    <property type="molecule type" value="protein"/>
</dbReference>
<dbReference type="ExpressionAtlas" id="P0CE92">
    <property type="expression patterns" value="baseline"/>
</dbReference>
<dbReference type="GO" id="GO:0009277">
    <property type="term" value="C:fungal-type cell wall"/>
    <property type="evidence" value="ECO:0000318"/>
    <property type="project" value="GO_Central"/>
</dbReference>
<dbReference type="GO" id="GO:0005199">
    <property type="term" value="F:structural constituent of cell wall"/>
    <property type="evidence" value="ECO:0000318"/>
    <property type="project" value="GO_Central"/>
</dbReference>
<dbReference type="GO" id="GO:0030437">
    <property type="term" value="P:ascospore formation"/>
    <property type="evidence" value="ECO:0007001"/>
    <property type="project" value="SGD"/>
</dbReference>
<dbReference type="GO" id="GO:0031505">
    <property type="term" value="P:fungal-type cell wall organization"/>
    <property type="evidence" value="ECO:0000318"/>
    <property type="project" value="GO_Central"/>
</dbReference>
<dbReference type="InterPro" id="IPR000992">
    <property type="entry name" value="SRP1_TIP1"/>
</dbReference>
<dbReference type="InterPro" id="IPR050788">
    <property type="entry name" value="Yeast_SRP1/TIP1_CWP"/>
</dbReference>
<dbReference type="PANTHER" id="PTHR31002:SF34">
    <property type="entry name" value="CELL WALL PROTEIN CWP1-RELATED"/>
    <property type="match status" value="1"/>
</dbReference>
<dbReference type="PANTHER" id="PTHR31002">
    <property type="entry name" value="SERIPAUPERIN"/>
    <property type="match status" value="1"/>
</dbReference>
<dbReference type="Pfam" id="PF00660">
    <property type="entry name" value="SRP1_TIP1"/>
    <property type="match status" value="1"/>
</dbReference>
<dbReference type="PROSITE" id="PS00724">
    <property type="entry name" value="SRP1_TIP1"/>
    <property type="match status" value="1"/>
</dbReference>
<keyword id="KW-1185">Reference proteome</keyword>
<keyword id="KW-0732">Signal</keyword>
<feature type="signal peptide" evidence="1">
    <location>
        <begin position="1"/>
        <end position="20"/>
    </location>
</feature>
<feature type="chain" id="PRO_0000203785" description="Seripauperin-8">
    <location>
        <begin position="21"/>
        <end position="120"/>
    </location>
</feature>
<organism>
    <name type="scientific">Saccharomyces cerevisiae (strain ATCC 204508 / S288c)</name>
    <name type="common">Baker's yeast</name>
    <dbReference type="NCBI Taxonomy" id="559292"/>
    <lineage>
        <taxon>Eukaryota</taxon>
        <taxon>Fungi</taxon>
        <taxon>Dikarya</taxon>
        <taxon>Ascomycota</taxon>
        <taxon>Saccharomycotina</taxon>
        <taxon>Saccharomycetes</taxon>
        <taxon>Saccharomycetales</taxon>
        <taxon>Saccharomycetaceae</taxon>
        <taxon>Saccharomyces</taxon>
    </lineage>
</organism>